<sequence>MIERIWSGQSRLYLLLLPLSWLYGAVTWLIRASYRLGLRSAWRSPVPVIIVGNLTAGGNGKTPVVIWLVEQLQQRGYRVGVVSRGYGGKSAVYPLLLSDNTTTAQAGDEPVLIFQRTGAPVAVSPKRADAIKALLQSHAVDFIITDDGLQHYALQRDFELVVIDGVRRFGNGWWLPAGPMREREGRLRSVDAAITNGGLAAEGEIPMQLVAREAVNLVTGQRQPAEQLQHVVAMAGIGHPPRFFATLNLLGIKPENEHAFADHQDYSLAQLSRLTSGPQILLMTEKDAVKCRAFALPNWWYLPVDAQLPSDRADKLLLNIQALSPDTK</sequence>
<organism>
    <name type="scientific">Yersinia pestis</name>
    <dbReference type="NCBI Taxonomy" id="632"/>
    <lineage>
        <taxon>Bacteria</taxon>
        <taxon>Pseudomonadati</taxon>
        <taxon>Pseudomonadota</taxon>
        <taxon>Gammaproteobacteria</taxon>
        <taxon>Enterobacterales</taxon>
        <taxon>Yersiniaceae</taxon>
        <taxon>Yersinia</taxon>
    </lineage>
</organism>
<protein>
    <recommendedName>
        <fullName evidence="1">Tetraacyldisaccharide 4'-kinase</fullName>
        <ecNumber evidence="1">2.7.1.130</ecNumber>
    </recommendedName>
    <alternativeName>
        <fullName evidence="1">Lipid A 4'-kinase</fullName>
    </alternativeName>
</protein>
<dbReference type="EC" id="2.7.1.130" evidence="1"/>
<dbReference type="EMBL" id="AL590842">
    <property type="protein sequence ID" value="CAL20048.1"/>
    <property type="molecule type" value="Genomic_DNA"/>
</dbReference>
<dbReference type="EMBL" id="AE009952">
    <property type="protein sequence ID" value="AAM86328.1"/>
    <property type="molecule type" value="Genomic_DNA"/>
</dbReference>
<dbReference type="EMBL" id="AE017042">
    <property type="protein sequence ID" value="AAS61440.1"/>
    <property type="molecule type" value="Genomic_DNA"/>
</dbReference>
<dbReference type="PIR" id="AF0170">
    <property type="entry name" value="AF0170"/>
</dbReference>
<dbReference type="RefSeq" id="WP_002211319.1">
    <property type="nucleotide sequence ID" value="NZ_WUCM01000045.1"/>
</dbReference>
<dbReference type="RefSeq" id="YP_002346419.1">
    <property type="nucleotide sequence ID" value="NC_003143.1"/>
</dbReference>
<dbReference type="SMR" id="Q8ZGA8"/>
<dbReference type="STRING" id="214092.YPO1396"/>
<dbReference type="PaxDb" id="214092-YPO1396"/>
<dbReference type="DNASU" id="1147723"/>
<dbReference type="EnsemblBacteria" id="AAS61440">
    <property type="protein sequence ID" value="AAS61440"/>
    <property type="gene ID" value="YP_1197"/>
</dbReference>
<dbReference type="GeneID" id="57977192"/>
<dbReference type="KEGG" id="ype:YPO1396"/>
<dbReference type="KEGG" id="ypk:y2776"/>
<dbReference type="KEGG" id="ypm:YP_1197"/>
<dbReference type="PATRIC" id="fig|214092.21.peg.1719"/>
<dbReference type="eggNOG" id="COG1663">
    <property type="taxonomic scope" value="Bacteria"/>
</dbReference>
<dbReference type="HOGENOM" id="CLU_038816_2_0_6"/>
<dbReference type="OMA" id="RAFPDHH"/>
<dbReference type="OrthoDB" id="9766423at2"/>
<dbReference type="UniPathway" id="UPA00359">
    <property type="reaction ID" value="UER00482"/>
</dbReference>
<dbReference type="Proteomes" id="UP000000815">
    <property type="component" value="Chromosome"/>
</dbReference>
<dbReference type="Proteomes" id="UP000001019">
    <property type="component" value="Chromosome"/>
</dbReference>
<dbReference type="Proteomes" id="UP000002490">
    <property type="component" value="Chromosome"/>
</dbReference>
<dbReference type="GO" id="GO:0005886">
    <property type="term" value="C:plasma membrane"/>
    <property type="evidence" value="ECO:0000318"/>
    <property type="project" value="GO_Central"/>
</dbReference>
<dbReference type="GO" id="GO:0005524">
    <property type="term" value="F:ATP binding"/>
    <property type="evidence" value="ECO:0007669"/>
    <property type="project" value="UniProtKB-UniRule"/>
</dbReference>
<dbReference type="GO" id="GO:0009029">
    <property type="term" value="F:tetraacyldisaccharide 4'-kinase activity"/>
    <property type="evidence" value="ECO:0000318"/>
    <property type="project" value="GO_Central"/>
</dbReference>
<dbReference type="GO" id="GO:0009245">
    <property type="term" value="P:lipid A biosynthetic process"/>
    <property type="evidence" value="ECO:0000318"/>
    <property type="project" value="GO_Central"/>
</dbReference>
<dbReference type="GO" id="GO:0009244">
    <property type="term" value="P:lipopolysaccharide core region biosynthetic process"/>
    <property type="evidence" value="ECO:0000318"/>
    <property type="project" value="GO_Central"/>
</dbReference>
<dbReference type="Gene3D" id="3.40.50.300">
    <property type="entry name" value="P-loop containing nucleotide triphosphate hydrolases"/>
    <property type="match status" value="1"/>
</dbReference>
<dbReference type="HAMAP" id="MF_00409">
    <property type="entry name" value="LpxK"/>
    <property type="match status" value="1"/>
</dbReference>
<dbReference type="InterPro" id="IPR003758">
    <property type="entry name" value="LpxK"/>
</dbReference>
<dbReference type="InterPro" id="IPR027417">
    <property type="entry name" value="P-loop_NTPase"/>
</dbReference>
<dbReference type="NCBIfam" id="TIGR00682">
    <property type="entry name" value="lpxK"/>
    <property type="match status" value="1"/>
</dbReference>
<dbReference type="PANTHER" id="PTHR42724">
    <property type="entry name" value="TETRAACYLDISACCHARIDE 4'-KINASE"/>
    <property type="match status" value="1"/>
</dbReference>
<dbReference type="PANTHER" id="PTHR42724:SF1">
    <property type="entry name" value="TETRAACYLDISACCHARIDE 4'-KINASE, MITOCHONDRIAL-RELATED"/>
    <property type="match status" value="1"/>
</dbReference>
<dbReference type="Pfam" id="PF02606">
    <property type="entry name" value="LpxK"/>
    <property type="match status" value="1"/>
</dbReference>
<dbReference type="SUPFAM" id="SSF52540">
    <property type="entry name" value="P-loop containing nucleoside triphosphate hydrolases"/>
    <property type="match status" value="1"/>
</dbReference>
<reference key="1">
    <citation type="journal article" date="2001" name="Nature">
        <title>Genome sequence of Yersinia pestis, the causative agent of plague.</title>
        <authorList>
            <person name="Parkhill J."/>
            <person name="Wren B.W."/>
            <person name="Thomson N.R."/>
            <person name="Titball R.W."/>
            <person name="Holden M.T.G."/>
            <person name="Prentice M.B."/>
            <person name="Sebaihia M."/>
            <person name="James K.D."/>
            <person name="Churcher C.M."/>
            <person name="Mungall K.L."/>
            <person name="Baker S."/>
            <person name="Basham D."/>
            <person name="Bentley S.D."/>
            <person name="Brooks K."/>
            <person name="Cerdeno-Tarraga A.-M."/>
            <person name="Chillingworth T."/>
            <person name="Cronin A."/>
            <person name="Davies R.M."/>
            <person name="Davis P."/>
            <person name="Dougan G."/>
            <person name="Feltwell T."/>
            <person name="Hamlin N."/>
            <person name="Holroyd S."/>
            <person name="Jagels K."/>
            <person name="Karlyshev A.V."/>
            <person name="Leather S."/>
            <person name="Moule S."/>
            <person name="Oyston P.C.F."/>
            <person name="Quail M.A."/>
            <person name="Rutherford K.M."/>
            <person name="Simmonds M."/>
            <person name="Skelton J."/>
            <person name="Stevens K."/>
            <person name="Whitehead S."/>
            <person name="Barrell B.G."/>
        </authorList>
    </citation>
    <scope>NUCLEOTIDE SEQUENCE [LARGE SCALE GENOMIC DNA]</scope>
    <source>
        <strain>CO-92 / Biovar Orientalis</strain>
    </source>
</reference>
<reference key="2">
    <citation type="journal article" date="2002" name="J. Bacteriol.">
        <title>Genome sequence of Yersinia pestis KIM.</title>
        <authorList>
            <person name="Deng W."/>
            <person name="Burland V."/>
            <person name="Plunkett G. III"/>
            <person name="Boutin A."/>
            <person name="Mayhew G.F."/>
            <person name="Liss P."/>
            <person name="Perna N.T."/>
            <person name="Rose D.J."/>
            <person name="Mau B."/>
            <person name="Zhou S."/>
            <person name="Schwartz D.C."/>
            <person name="Fetherston J.D."/>
            <person name="Lindler L.E."/>
            <person name="Brubaker R.R."/>
            <person name="Plano G.V."/>
            <person name="Straley S.C."/>
            <person name="McDonough K.A."/>
            <person name="Nilles M.L."/>
            <person name="Matson J.S."/>
            <person name="Blattner F.R."/>
            <person name="Perry R.D."/>
        </authorList>
    </citation>
    <scope>NUCLEOTIDE SEQUENCE [LARGE SCALE GENOMIC DNA]</scope>
    <source>
        <strain>KIM10+ / Biovar Mediaevalis</strain>
    </source>
</reference>
<reference key="3">
    <citation type="journal article" date="2004" name="DNA Res.">
        <title>Complete genome sequence of Yersinia pestis strain 91001, an isolate avirulent to humans.</title>
        <authorList>
            <person name="Song Y."/>
            <person name="Tong Z."/>
            <person name="Wang J."/>
            <person name="Wang L."/>
            <person name="Guo Z."/>
            <person name="Han Y."/>
            <person name="Zhang J."/>
            <person name="Pei D."/>
            <person name="Zhou D."/>
            <person name="Qin H."/>
            <person name="Pang X."/>
            <person name="Han Y."/>
            <person name="Zhai J."/>
            <person name="Li M."/>
            <person name="Cui B."/>
            <person name="Qi Z."/>
            <person name="Jin L."/>
            <person name="Dai R."/>
            <person name="Chen F."/>
            <person name="Li S."/>
            <person name="Ye C."/>
            <person name="Du Z."/>
            <person name="Lin W."/>
            <person name="Wang J."/>
            <person name="Yu J."/>
            <person name="Yang H."/>
            <person name="Wang J."/>
            <person name="Huang P."/>
            <person name="Yang R."/>
        </authorList>
    </citation>
    <scope>NUCLEOTIDE SEQUENCE [LARGE SCALE GENOMIC DNA]</scope>
    <source>
        <strain>91001 / Biovar Mediaevalis</strain>
    </source>
</reference>
<name>LPXK_YERPE</name>
<keyword id="KW-0067">ATP-binding</keyword>
<keyword id="KW-0418">Kinase</keyword>
<keyword id="KW-0441">Lipid A biosynthesis</keyword>
<keyword id="KW-0444">Lipid biosynthesis</keyword>
<keyword id="KW-0443">Lipid metabolism</keyword>
<keyword id="KW-0547">Nucleotide-binding</keyword>
<keyword id="KW-1185">Reference proteome</keyword>
<keyword id="KW-0808">Transferase</keyword>
<evidence type="ECO:0000255" key="1">
    <source>
        <dbReference type="HAMAP-Rule" id="MF_00409"/>
    </source>
</evidence>
<accession>Q8ZGA8</accession>
<accession>Q0WH19</accession>
<feature type="chain" id="PRO_0000190962" description="Tetraacyldisaccharide 4'-kinase">
    <location>
        <begin position="1"/>
        <end position="328"/>
    </location>
</feature>
<feature type="binding site" evidence="1">
    <location>
        <begin position="55"/>
        <end position="62"/>
    </location>
    <ligand>
        <name>ATP</name>
        <dbReference type="ChEBI" id="CHEBI:30616"/>
    </ligand>
</feature>
<gene>
    <name evidence="1" type="primary">lpxK</name>
    <name type="ordered locus">YPO1396</name>
    <name type="ordered locus">y2776</name>
    <name type="ordered locus">YP_1197</name>
</gene>
<proteinExistence type="inferred from homology"/>
<comment type="function">
    <text evidence="1">Transfers the gamma-phosphate of ATP to the 4'-position of a tetraacyldisaccharide 1-phosphate intermediate (termed DS-1-P) to form tetraacyldisaccharide 1,4'-bis-phosphate (lipid IVA).</text>
</comment>
<comment type="catalytic activity">
    <reaction evidence="1">
        <text>a lipid A disaccharide + ATP = a lipid IVA + ADP + H(+)</text>
        <dbReference type="Rhea" id="RHEA:67840"/>
        <dbReference type="ChEBI" id="CHEBI:15378"/>
        <dbReference type="ChEBI" id="CHEBI:30616"/>
        <dbReference type="ChEBI" id="CHEBI:176343"/>
        <dbReference type="ChEBI" id="CHEBI:176425"/>
        <dbReference type="ChEBI" id="CHEBI:456216"/>
        <dbReference type="EC" id="2.7.1.130"/>
    </reaction>
</comment>
<comment type="pathway">
    <text evidence="1">Glycolipid biosynthesis; lipid IV(A) biosynthesis; lipid IV(A) from (3R)-3-hydroxytetradecanoyl-[acyl-carrier-protein] and UDP-N-acetyl-alpha-D-glucosamine: step 6/6.</text>
</comment>
<comment type="similarity">
    <text evidence="1">Belongs to the LpxK family.</text>
</comment>